<organism>
    <name type="scientific">Saccharolobus solfataricus (strain ATCC 35092 / DSM 1617 / JCM 11322 / P2)</name>
    <name type="common">Sulfolobus solfataricus</name>
    <dbReference type="NCBI Taxonomy" id="273057"/>
    <lineage>
        <taxon>Archaea</taxon>
        <taxon>Thermoproteota</taxon>
        <taxon>Thermoprotei</taxon>
        <taxon>Sulfolobales</taxon>
        <taxon>Sulfolobaceae</taxon>
        <taxon>Saccharolobus</taxon>
    </lineage>
</organism>
<feature type="chain" id="PRO_0000131418" description="Large ribosomal subunit protein uL18">
    <location>
        <begin position="1"/>
        <end position="199"/>
    </location>
</feature>
<evidence type="ECO:0000255" key="1">
    <source>
        <dbReference type="HAMAP-Rule" id="MF_01337"/>
    </source>
</evidence>
<evidence type="ECO:0000305" key="2"/>
<protein>
    <recommendedName>
        <fullName evidence="1">Large ribosomal subunit protein uL18</fullName>
    </recommendedName>
    <alternativeName>
        <fullName evidence="2">50S ribosomal protein L18</fullName>
    </alternativeName>
</protein>
<proteinExistence type="inferred from homology"/>
<sequence length="199" mass="22402">MNKLANGPNYKVKPRRRREGKTNYYKRYVYVISKQTRFIVRITNKYVIVQIAKIDPKGDIMIASAHSAELAKKFGWKGDENNTPAAYLTGYLAGLRAIKRGVTECVADIGLHVPSKGNRVFYVIKGAIDAGLKIPIGDISIENDRIKGEHIAKYAEKLKSENSDLYSKLFSRYLQRGLNPENLPSHFEEILNKIKSSGG</sequence>
<accession>Q9UX88</accession>
<dbReference type="EMBL" id="Y18930">
    <property type="protein sequence ID" value="CAB57604.1"/>
    <property type="molecule type" value="Genomic_DNA"/>
</dbReference>
<dbReference type="EMBL" id="AE006641">
    <property type="protein sequence ID" value="AAK41000.1"/>
    <property type="molecule type" value="Genomic_DNA"/>
</dbReference>
<dbReference type="PIR" id="A99218">
    <property type="entry name" value="A99218"/>
</dbReference>
<dbReference type="SMR" id="Q9UX88"/>
<dbReference type="FunCoup" id="Q9UX88">
    <property type="interactions" value="233"/>
</dbReference>
<dbReference type="STRING" id="273057.SSO0699"/>
<dbReference type="PaxDb" id="273057-SSO0699"/>
<dbReference type="EnsemblBacteria" id="AAK41000">
    <property type="protein sequence ID" value="AAK41000"/>
    <property type="gene ID" value="SSO0699"/>
</dbReference>
<dbReference type="KEGG" id="sso:SSO0699"/>
<dbReference type="PATRIC" id="fig|273057.12.peg.699"/>
<dbReference type="eggNOG" id="arCOG04088">
    <property type="taxonomic scope" value="Archaea"/>
</dbReference>
<dbReference type="HOGENOM" id="CLU_056222_2_0_2"/>
<dbReference type="InParanoid" id="Q9UX88"/>
<dbReference type="PhylomeDB" id="Q9UX88"/>
<dbReference type="Proteomes" id="UP000001974">
    <property type="component" value="Chromosome"/>
</dbReference>
<dbReference type="GO" id="GO:0022625">
    <property type="term" value="C:cytosolic large ribosomal subunit"/>
    <property type="evidence" value="ECO:0000318"/>
    <property type="project" value="GO_Central"/>
</dbReference>
<dbReference type="GO" id="GO:0008097">
    <property type="term" value="F:5S rRNA binding"/>
    <property type="evidence" value="ECO:0000318"/>
    <property type="project" value="GO_Central"/>
</dbReference>
<dbReference type="GO" id="GO:0003735">
    <property type="term" value="F:structural constituent of ribosome"/>
    <property type="evidence" value="ECO:0000318"/>
    <property type="project" value="GO_Central"/>
</dbReference>
<dbReference type="GO" id="GO:0000027">
    <property type="term" value="P:ribosomal large subunit assembly"/>
    <property type="evidence" value="ECO:0000318"/>
    <property type="project" value="GO_Central"/>
</dbReference>
<dbReference type="GO" id="GO:0006412">
    <property type="term" value="P:translation"/>
    <property type="evidence" value="ECO:0007669"/>
    <property type="project" value="UniProtKB-UniRule"/>
</dbReference>
<dbReference type="CDD" id="cd00432">
    <property type="entry name" value="Ribosomal_L18_L5e"/>
    <property type="match status" value="1"/>
</dbReference>
<dbReference type="FunFam" id="3.30.420.100:FF:000008">
    <property type="entry name" value="50S ribosomal protein L18"/>
    <property type="match status" value="1"/>
</dbReference>
<dbReference type="Gene3D" id="3.30.420.100">
    <property type="match status" value="1"/>
</dbReference>
<dbReference type="HAMAP" id="MF_01337_A">
    <property type="entry name" value="Ribosomal_uL18_A"/>
    <property type="match status" value="1"/>
</dbReference>
<dbReference type="InterPro" id="IPR005485">
    <property type="entry name" value="Rbsml_uL18_euk"/>
</dbReference>
<dbReference type="NCBIfam" id="NF006342">
    <property type="entry name" value="PRK08569.1"/>
    <property type="match status" value="1"/>
</dbReference>
<dbReference type="PANTHER" id="PTHR23410:SF12">
    <property type="entry name" value="LARGE RIBOSOMAL SUBUNIT PROTEIN UL18"/>
    <property type="match status" value="1"/>
</dbReference>
<dbReference type="PANTHER" id="PTHR23410">
    <property type="entry name" value="RIBOSOMAL PROTEIN L5-RELATED"/>
    <property type="match status" value="1"/>
</dbReference>
<dbReference type="Pfam" id="PF17144">
    <property type="entry name" value="Ribosomal_L5e"/>
    <property type="match status" value="2"/>
</dbReference>
<dbReference type="SUPFAM" id="SSF53137">
    <property type="entry name" value="Translational machinery components"/>
    <property type="match status" value="1"/>
</dbReference>
<name>RL18_SACS2</name>
<keyword id="KW-1185">Reference proteome</keyword>
<keyword id="KW-0687">Ribonucleoprotein</keyword>
<keyword id="KW-0689">Ribosomal protein</keyword>
<keyword id="KW-0694">RNA-binding</keyword>
<keyword id="KW-0699">rRNA-binding</keyword>
<comment type="function">
    <text evidence="1">This is one of the proteins that bind and probably mediate the attachment of the 5S RNA into the large ribosomal subunit, where it forms part of the central protuberance.</text>
</comment>
<comment type="subunit">
    <text evidence="1">Part of the 50S ribosomal subunit. Contacts the 5S and 23S rRNAs.</text>
</comment>
<comment type="similarity">
    <text evidence="1">Belongs to the universal ribosomal protein uL18 family.</text>
</comment>
<reference key="1">
    <citation type="journal article" date="2000" name="Genome">
        <title>Gene content and organization of a 281-kbp contig from the genome of the extremely thermophilic archaeon, Sulfolobus solfataricus P2.</title>
        <authorList>
            <person name="Charlebois R.L."/>
            <person name="Singh R.K."/>
            <person name="Chan-Weiher C.C.-Y."/>
            <person name="Allard G."/>
            <person name="Chow C."/>
            <person name="Confalonieri F."/>
            <person name="Curtis B."/>
            <person name="Duguet M."/>
            <person name="Erauso G."/>
            <person name="Faguy D."/>
            <person name="Gaasterland T."/>
            <person name="Garrett R.A."/>
            <person name="Gordon P."/>
            <person name="Jeffries A.C."/>
            <person name="Kozera C."/>
            <person name="Kushwaha N."/>
            <person name="Lafleur E."/>
            <person name="Medina N."/>
            <person name="Peng X."/>
            <person name="Penny S.L."/>
            <person name="She Q."/>
            <person name="St Jean A."/>
            <person name="van der Oost J."/>
            <person name="Young F."/>
            <person name="Zivanovic Y."/>
            <person name="Doolittle W.F."/>
            <person name="Ragan M.A."/>
            <person name="Sensen C.W."/>
        </authorList>
    </citation>
    <scope>NUCLEOTIDE SEQUENCE [LARGE SCALE GENOMIC DNA]</scope>
    <source>
        <strain>ATCC 35092 / DSM 1617 / JCM 11322 / P2</strain>
    </source>
</reference>
<reference key="2">
    <citation type="journal article" date="2001" name="Proc. Natl. Acad. Sci. U.S.A.">
        <title>The complete genome of the crenarchaeon Sulfolobus solfataricus P2.</title>
        <authorList>
            <person name="She Q."/>
            <person name="Singh R.K."/>
            <person name="Confalonieri F."/>
            <person name="Zivanovic Y."/>
            <person name="Allard G."/>
            <person name="Awayez M.J."/>
            <person name="Chan-Weiher C.C.-Y."/>
            <person name="Clausen I.G."/>
            <person name="Curtis B.A."/>
            <person name="De Moors A."/>
            <person name="Erauso G."/>
            <person name="Fletcher C."/>
            <person name="Gordon P.M.K."/>
            <person name="Heikamp-de Jong I."/>
            <person name="Jeffries A.C."/>
            <person name="Kozera C.J."/>
            <person name="Medina N."/>
            <person name="Peng X."/>
            <person name="Thi-Ngoc H.P."/>
            <person name="Redder P."/>
            <person name="Schenk M.E."/>
            <person name="Theriault C."/>
            <person name="Tolstrup N."/>
            <person name="Charlebois R.L."/>
            <person name="Doolittle W.F."/>
            <person name="Duguet M."/>
            <person name="Gaasterland T."/>
            <person name="Garrett R.A."/>
            <person name="Ragan M.A."/>
            <person name="Sensen C.W."/>
            <person name="Van der Oost J."/>
        </authorList>
    </citation>
    <scope>NUCLEOTIDE SEQUENCE [LARGE SCALE GENOMIC DNA]</scope>
    <source>
        <strain>ATCC 35092 / DSM 1617 / JCM 11322 / P2</strain>
    </source>
</reference>
<gene>
    <name evidence="1" type="primary">rpl18</name>
    <name evidence="1" type="synonym">rpl18Ab</name>
    <name type="ordered locus">SSO0699</name>
    <name type="ORF">C10_031</name>
</gene>